<name>GP13_BPPH2</name>
<dbReference type="EC" id="3.2.1.-"/>
<dbReference type="EC" id="3.4.-.-"/>
<dbReference type="EMBL" id="M14782">
    <property type="protein sequence ID" value="AAA32286.1"/>
    <property type="molecule type" value="Genomic_DNA"/>
</dbReference>
<dbReference type="EMBL" id="X04962">
    <property type="protein sequence ID" value="CAA28630.1"/>
    <property type="molecule type" value="Genomic_DNA"/>
</dbReference>
<dbReference type="EMBL" id="EU771092">
    <property type="protein sequence ID" value="ACE96036.1"/>
    <property type="molecule type" value="Genomic_DNA"/>
</dbReference>
<dbReference type="PIR" id="H25816">
    <property type="entry name" value="WMBP23"/>
</dbReference>
<dbReference type="PDB" id="3CSQ">
    <property type="method" value="X-ray"/>
    <property type="resolution" value="1.80 A"/>
    <property type="chains" value="A/B/C/D=1-334"/>
</dbReference>
<dbReference type="PDB" id="3CSR">
    <property type="method" value="X-ray"/>
    <property type="resolution" value="1.80 A"/>
    <property type="chains" value="A=1-159"/>
</dbReference>
<dbReference type="PDB" id="3CSZ">
    <property type="method" value="X-ray"/>
    <property type="resolution" value="1.80 A"/>
    <property type="chains" value="A=1-159"/>
</dbReference>
<dbReference type="PDB" id="3CT0">
    <property type="method" value="X-ray"/>
    <property type="resolution" value="1.77 A"/>
    <property type="chains" value="A=1-159"/>
</dbReference>
<dbReference type="PDB" id="3CT1">
    <property type="method" value="X-ray"/>
    <property type="resolution" value="1.51 A"/>
    <property type="chains" value="A=1-159"/>
</dbReference>
<dbReference type="PDB" id="3CT5">
    <property type="method" value="X-ray"/>
    <property type="resolution" value="1.37 A"/>
    <property type="chains" value="A=1-159"/>
</dbReference>
<dbReference type="PDBsum" id="3CSQ"/>
<dbReference type="PDBsum" id="3CSR"/>
<dbReference type="PDBsum" id="3CSZ"/>
<dbReference type="PDBsum" id="3CT0"/>
<dbReference type="PDBsum" id="3CT1"/>
<dbReference type="PDBsum" id="3CT5"/>
<dbReference type="SMR" id="P15132"/>
<dbReference type="MEROPS" id="M23.008"/>
<dbReference type="KEGG" id="vg:6446506"/>
<dbReference type="EvolutionaryTrace" id="P15132"/>
<dbReference type="Proteomes" id="UP000001207">
    <property type="component" value="Genome"/>
</dbReference>
<dbReference type="GO" id="GO:0098023">
    <property type="term" value="C:virus tail, tip"/>
    <property type="evidence" value="ECO:0000314"/>
    <property type="project" value="UniProtKB"/>
</dbReference>
<dbReference type="GO" id="GO:0016798">
    <property type="term" value="F:hydrolase activity, acting on glycosyl bonds"/>
    <property type="evidence" value="ECO:0007669"/>
    <property type="project" value="UniProtKB-KW"/>
</dbReference>
<dbReference type="GO" id="GO:0046872">
    <property type="term" value="F:metal ion binding"/>
    <property type="evidence" value="ECO:0007669"/>
    <property type="project" value="UniProtKB-KW"/>
</dbReference>
<dbReference type="GO" id="GO:0008237">
    <property type="term" value="F:metallopeptidase activity"/>
    <property type="evidence" value="ECO:0007669"/>
    <property type="project" value="UniProtKB-KW"/>
</dbReference>
<dbReference type="GO" id="GO:0071555">
    <property type="term" value="P:cell wall organization"/>
    <property type="evidence" value="ECO:0007669"/>
    <property type="project" value="UniProtKB-KW"/>
</dbReference>
<dbReference type="GO" id="GO:0042742">
    <property type="term" value="P:defense response to bacterium"/>
    <property type="evidence" value="ECO:0007669"/>
    <property type="project" value="UniProtKB-KW"/>
</dbReference>
<dbReference type="GO" id="GO:0031640">
    <property type="term" value="P:killing of cells of another organism"/>
    <property type="evidence" value="ECO:0007669"/>
    <property type="project" value="UniProtKB-KW"/>
</dbReference>
<dbReference type="GO" id="GO:0006508">
    <property type="term" value="P:proteolysis"/>
    <property type="evidence" value="ECO:0007669"/>
    <property type="project" value="UniProtKB-KW"/>
</dbReference>
<dbReference type="GO" id="GO:0098994">
    <property type="term" value="P:symbiont entry into host cell via disruption of host cell envelope"/>
    <property type="evidence" value="ECO:0007669"/>
    <property type="project" value="UniProtKB-KW"/>
</dbReference>
<dbReference type="GO" id="GO:0098932">
    <property type="term" value="P:symbiont entry into host cell via disruption of host cell wall peptidoglycan"/>
    <property type="evidence" value="ECO:0007669"/>
    <property type="project" value="UniProtKB-KW"/>
</dbReference>
<dbReference type="GO" id="GO:0099002">
    <property type="term" value="P:symbiont genome ejection through host cell envelope, short tail mechanism"/>
    <property type="evidence" value="ECO:0007669"/>
    <property type="project" value="UniProtKB-KW"/>
</dbReference>
<dbReference type="GO" id="GO:0098004">
    <property type="term" value="P:virus tail fiber assembly"/>
    <property type="evidence" value="ECO:0000314"/>
    <property type="project" value="CACAO"/>
</dbReference>
<dbReference type="CDD" id="cd12797">
    <property type="entry name" value="M23_peptidase"/>
    <property type="match status" value="1"/>
</dbReference>
<dbReference type="Gene3D" id="1.10.530.10">
    <property type="match status" value="1"/>
</dbReference>
<dbReference type="Gene3D" id="2.70.70.10">
    <property type="entry name" value="Glucose Permease (Domain IIA)"/>
    <property type="match status" value="1"/>
</dbReference>
<dbReference type="InterPro" id="IPR011055">
    <property type="entry name" value="Dup_hybrid_motif"/>
</dbReference>
<dbReference type="InterPro" id="IPR041219">
    <property type="entry name" value="Phage_lysozyme2"/>
</dbReference>
<dbReference type="Pfam" id="PF18013">
    <property type="entry name" value="Phage_lysozyme2"/>
    <property type="match status" value="1"/>
</dbReference>
<dbReference type="SUPFAM" id="SSF51261">
    <property type="entry name" value="Duplicated hybrid motif"/>
    <property type="match status" value="1"/>
</dbReference>
<evidence type="ECO:0000269" key="1">
    <source>
    </source>
</evidence>
<evidence type="ECO:0000269" key="2">
    <source>
    </source>
</evidence>
<evidence type="ECO:0000303" key="3">
    <source>
    </source>
</evidence>
<evidence type="ECO:0000303" key="4">
    <source ref="3"/>
</evidence>
<evidence type="ECO:0000305" key="5"/>
<evidence type="ECO:0000305" key="6">
    <source>
    </source>
</evidence>
<evidence type="ECO:0000305" key="7">
    <source>
    </source>
</evidence>
<evidence type="ECO:0007744" key="8">
    <source>
        <dbReference type="PDB" id="3CSQ"/>
    </source>
</evidence>
<evidence type="ECO:0007744" key="9">
    <source>
        <dbReference type="PDB" id="3CSZ"/>
    </source>
</evidence>
<evidence type="ECO:0007744" key="10">
    <source>
        <dbReference type="PDB" id="3CT0"/>
    </source>
</evidence>
<evidence type="ECO:0007744" key="11">
    <source>
        <dbReference type="PDB" id="3CT1"/>
    </source>
</evidence>
<evidence type="ECO:0007744" key="12">
    <source>
        <dbReference type="PDB" id="3CT5"/>
    </source>
</evidence>
<evidence type="ECO:0007829" key="13">
    <source>
        <dbReference type="PDB" id="3CSQ"/>
    </source>
</evidence>
<evidence type="ECO:0007829" key="14">
    <source>
        <dbReference type="PDB" id="3CT5"/>
    </source>
</evidence>
<comment type="function">
    <text evidence="6 7">May serve as a plug to restrain the highly pressurized packaged genome and thus would be the first virion protein to contact the host cell wall, degrading the peptidoglycan layer and thereby facilitating viral genome entry into the host bacteria. Acts probably as a multifunctional enzyme that degrades N-acetylglucosamine polymers (in vitro) and cleaves the peptide cross-links of the host cell wall. Essential for the tail assembly.</text>
</comment>
<comment type="cofactor">
    <cofactor evidence="2">
        <name>Zn(2+)</name>
        <dbReference type="ChEBI" id="CHEBI:29105"/>
    </cofactor>
    <text evidence="2">Binds 1 zinc ion per subunit.</text>
</comment>
<comment type="subcellular location">
    <subcellularLocation>
        <location evidence="1 2">Virion</location>
    </subcellularLocation>
    <text>Located at the distal tip of the tail knob.</text>
</comment>
<comment type="similarity">
    <text evidence="5">In the N-terminal section; belongs to the glycosyl hydrolase 24 family.</text>
</comment>
<comment type="similarity">
    <text evidence="5">In the C-terminal section; belongs to the peptidase M23B family.</text>
</comment>
<accession>P15132</accession>
<accession>B3VMP9</accession>
<feature type="chain" id="PRO_0000106595" description="Morphogenesis protein 1">
    <location>
        <begin position="1"/>
        <end position="365"/>
    </location>
</feature>
<feature type="region of interest" description="Lysozyme-like glycosidase">
    <location>
        <begin position="1"/>
        <end position="159"/>
    </location>
</feature>
<feature type="region of interest" description="Linker">
    <location>
        <begin position="160"/>
        <end position="165"/>
    </location>
</feature>
<feature type="region of interest" description="Probable metalloendopeptidase">
    <location>
        <begin position="166"/>
        <end position="365"/>
    </location>
</feature>
<feature type="active site" description="For lysozyme-like glycosidase activity" evidence="5">
    <location>
        <position position="45"/>
    </location>
</feature>
<feature type="binding site" evidence="9 10 11 12">
    <location>
        <position position="45"/>
    </location>
    <ligand>
        <name>substrate</name>
    </ligand>
</feature>
<feature type="binding site" evidence="9 10 11 12">
    <location>
        <position position="71"/>
    </location>
    <ligand>
        <name>substrate</name>
    </ligand>
</feature>
<feature type="binding site" evidence="9 10 11 12">
    <location>
        <position position="106"/>
    </location>
    <ligand>
        <name>substrate</name>
    </ligand>
</feature>
<feature type="binding site" evidence="9 10 11 12">
    <location>
        <begin position="137"/>
        <end position="140"/>
    </location>
    <ligand>
        <name>substrate</name>
    </ligand>
</feature>
<feature type="binding site" evidence="8">
    <location>
        <position position="188"/>
    </location>
    <ligand>
        <name>Zn(2+)</name>
        <dbReference type="ChEBI" id="CHEBI:29105"/>
    </ligand>
</feature>
<feature type="binding site" evidence="8">
    <location>
        <position position="195"/>
    </location>
    <ligand>
        <name>Zn(2+)</name>
        <dbReference type="ChEBI" id="CHEBI:29105"/>
    </ligand>
</feature>
<feature type="binding site" evidence="8">
    <location>
        <position position="280"/>
    </location>
    <ligand>
        <name>Zn(2+)</name>
        <dbReference type="ChEBI" id="CHEBI:29105"/>
    </ligand>
</feature>
<feature type="sequence conflict" description="In Ref. 3; ACE96036." evidence="5" ref="3">
    <original>D</original>
    <variation>N</variation>
    <location>
        <position position="89"/>
    </location>
</feature>
<feature type="sequence conflict" description="In Ref. 3; ACE96036." evidence="5" ref="3">
    <location>
        <position position="340"/>
    </location>
</feature>
<feature type="strand" evidence="14">
    <location>
        <begin position="5"/>
        <end position="7"/>
    </location>
</feature>
<feature type="helix" evidence="14">
    <location>
        <begin position="11"/>
        <end position="26"/>
    </location>
</feature>
<feature type="turn" evidence="14">
    <location>
        <begin position="27"/>
        <end position="29"/>
    </location>
</feature>
<feature type="helix" evidence="14">
    <location>
        <begin position="32"/>
        <end position="46"/>
    </location>
</feature>
<feature type="helix" evidence="14">
    <location>
        <begin position="54"/>
        <end position="56"/>
    </location>
</feature>
<feature type="turn" evidence="14">
    <location>
        <begin position="66"/>
        <end position="69"/>
    </location>
</feature>
<feature type="strand" evidence="14">
    <location>
        <begin position="70"/>
        <end position="72"/>
    </location>
</feature>
<feature type="helix" evidence="14">
    <location>
        <begin position="74"/>
        <end position="83"/>
    </location>
</feature>
<feature type="strand" evidence="14">
    <location>
        <begin position="87"/>
        <end position="89"/>
    </location>
</feature>
<feature type="helix" evidence="14">
    <location>
        <begin position="90"/>
        <end position="103"/>
    </location>
</feature>
<feature type="strand" evidence="14">
    <location>
        <begin position="110"/>
        <end position="112"/>
    </location>
</feature>
<feature type="helix" evidence="14">
    <location>
        <begin position="115"/>
        <end position="120"/>
    </location>
</feature>
<feature type="helix" evidence="14">
    <location>
        <begin position="125"/>
        <end position="135"/>
    </location>
</feature>
<feature type="helix" evidence="14">
    <location>
        <begin position="146"/>
        <end position="157"/>
    </location>
</feature>
<feature type="strand" evidence="13">
    <location>
        <begin position="172"/>
        <end position="180"/>
    </location>
</feature>
<feature type="turn" evidence="13">
    <location>
        <begin position="185"/>
        <end position="187"/>
    </location>
</feature>
<feature type="strand" evidence="13">
    <location>
        <begin position="194"/>
        <end position="196"/>
    </location>
</feature>
<feature type="strand" evidence="13">
    <location>
        <begin position="199"/>
        <end position="202"/>
    </location>
</feature>
<feature type="strand" evidence="13">
    <location>
        <begin position="204"/>
        <end position="206"/>
    </location>
</feature>
<feature type="strand" evidence="13">
    <location>
        <begin position="208"/>
        <end position="217"/>
    </location>
</feature>
<feature type="turn" evidence="13">
    <location>
        <begin position="218"/>
        <end position="221"/>
    </location>
</feature>
<feature type="strand" evidence="13">
    <location>
        <begin position="222"/>
        <end position="229"/>
    </location>
</feature>
<feature type="strand" evidence="13">
    <location>
        <begin position="241"/>
        <end position="246"/>
    </location>
</feature>
<feature type="strand" evidence="13">
    <location>
        <begin position="263"/>
        <end position="267"/>
    </location>
</feature>
<feature type="strand" evidence="13">
    <location>
        <begin position="278"/>
        <end position="287"/>
    </location>
</feature>
<feature type="strand" evidence="13">
    <location>
        <begin position="292"/>
        <end position="302"/>
    </location>
</feature>
<feature type="helix" evidence="13">
    <location>
        <begin position="307"/>
        <end position="310"/>
    </location>
</feature>
<feature type="strand" evidence="13">
    <location>
        <begin position="317"/>
        <end position="320"/>
    </location>
</feature>
<organismHost>
    <name type="scientific">Bacillus subtilis</name>
    <dbReference type="NCBI Taxonomy" id="1423"/>
</organismHost>
<organism>
    <name type="scientific">Bacillus phage phi29</name>
    <name type="common">Bacteriophage phi-29</name>
    <dbReference type="NCBI Taxonomy" id="2884424"/>
    <lineage>
        <taxon>Viruses</taxon>
        <taxon>Duplodnaviria</taxon>
        <taxon>Heunggongvirae</taxon>
        <taxon>Uroviricota</taxon>
        <taxon>Caudoviricetes</taxon>
        <taxon>Salasmaviridae</taxon>
        <taxon>Picovirinae</taxon>
        <taxon>Salasvirus</taxon>
        <taxon>Salasvirus phi29</taxon>
    </lineage>
</organism>
<proteinExistence type="evidence at protein level"/>
<keyword id="KW-0002">3D-structure</keyword>
<keyword id="KW-0929">Antimicrobial</keyword>
<keyword id="KW-0081">Bacteriolytic enzyme</keyword>
<keyword id="KW-0961">Cell wall biogenesis/degradation</keyword>
<keyword id="KW-1235">Degradation of host cell envelope components during virus entry</keyword>
<keyword id="KW-1236">Degradation of host peptidoglycans during virus entry</keyword>
<keyword id="KW-0326">Glycosidase</keyword>
<keyword id="KW-0378">Hydrolase</keyword>
<keyword id="KW-0426">Late protein</keyword>
<keyword id="KW-0479">Metal-binding</keyword>
<keyword id="KW-0482">Metalloprotease</keyword>
<keyword id="KW-0511">Multifunctional enzyme</keyword>
<keyword id="KW-0645">Protease</keyword>
<keyword id="KW-1185">Reference proteome</keyword>
<keyword id="KW-1171">Viral genome ejection through host cell envelope</keyword>
<keyword id="KW-1162">Viral penetration into host cytoplasm</keyword>
<keyword id="KW-1188">Viral release from host cell</keyword>
<keyword id="KW-1244">Viral short tail ejection system</keyword>
<keyword id="KW-1245">Viral tail assembly</keyword>
<keyword id="KW-0946">Virion</keyword>
<keyword id="KW-1160">Virus entry into host cell</keyword>
<keyword id="KW-0862">Zinc</keyword>
<sequence length="365" mass="40925">MVYVSNKYLTMSEMKVNAQYILNYLSSNGWTKQAICGMLGNMQSESTINPGLWQNLDEGNTSLGFGLVQWTPASNYINWANSQGLPYKDMDSELKRIIWEVNNNAQWINLRDMTFKEYIKSTKTPRELAMIFLASYERPANPNQPERGDQAEYWYKNLSGGGGGGLQLAQFPMDIINISQGENGSFSHKGTLCIDFVGKTEKYPYYAPCDCTCVWRGDASAYLAWTSDKEVMCADGSVRYITWVNVHESPLPFDVGKKLKKGDLMGHTGIGGNVTGDHWHFNVIDGKEYQGWTKKPDSCLAGTELHIYDVFAVNNVEIINGNGYDWKTSDWQDGDGGDGDDDNDNNKTKDLITLLLSDALHGWKA</sequence>
<gene>
    <name type="primary">13</name>
</gene>
<protein>
    <recommendedName>
        <fullName evidence="4">Morphogenesis protein 1</fullName>
    </recommendedName>
    <alternativeName>
        <fullName evidence="3">Gene product 13</fullName>
        <shortName evidence="3">gp13</shortName>
    </alternativeName>
    <alternativeName>
        <fullName evidence="5">Protein p13</fullName>
    </alternativeName>
    <domain>
        <recommendedName>
            <fullName>Lysozyme-like glycosidase</fullName>
            <ecNumber>3.2.1.-</ecNumber>
        </recommendedName>
    </domain>
    <domain>
        <recommendedName>
            <fullName>Probable metalloendopeptidase</fullName>
            <ecNumber>3.4.-.-</ecNumber>
        </recommendedName>
    </domain>
</protein>
<reference key="1">
    <citation type="journal article" date="1986" name="Gene">
        <title>Nucleotide sequence of the late region of Bacillus phage phi 29 completes the 19,285-bp sequence of phi 29 genome. Comparison with the homologous sequence of phage PZA.</title>
        <authorList>
            <person name="Vlcek C."/>
            <person name="Paces V."/>
        </authorList>
    </citation>
    <scope>NUCLEOTIDE SEQUENCE [GENOMIC DNA]</scope>
</reference>
<reference key="2">
    <citation type="journal article" date="1986" name="Nucleic Acids Res.">
        <title>Nucleotide sequence of Bacillus phage phi 29 genes 14 and 15: homology of gene 15 with other phage lysozymes.</title>
        <authorList>
            <person name="Garvey K.J."/>
            <person name="Saedi M.S."/>
            <person name="Ito J."/>
        </authorList>
    </citation>
    <scope>NUCLEOTIDE SEQUENCE [GENOMIC DNA] OF 239-365</scope>
</reference>
<reference key="3">
    <citation type="submission" date="2008-05" db="EMBL/GenBank/DDBJ databases">
        <authorList>
            <person name="Villegas A.P."/>
            <person name="Lingohr E.J."/>
            <person name="Ceyssens P.-J."/>
            <person name="Kropinski A.M."/>
        </authorList>
    </citation>
    <scope>NUCLEOTIDE SEQUENCE [GENOMIC DNA]</scope>
</reference>
<reference key="4">
    <citation type="journal article" date="2008" name="J. Mol. Biol.">
        <title>Multifunctional roles of a bacteriophage phi 29 morphogenetic factor in assembly and infection.</title>
        <authorList>
            <person name="Cohen D.N."/>
            <person name="Erickson S.E."/>
            <person name="Xiang Y."/>
            <person name="Rossmann M.G."/>
            <person name="Anderson D.L."/>
        </authorList>
    </citation>
    <scope>FUNCTION</scope>
    <scope>SUBCELLULAR LOCATION</scope>
</reference>
<reference key="5">
    <citation type="journal article" date="2008" name="Proc. Natl. Acad. Sci. U.S.A.">
        <title>Crystal and cryoEM structural studies of a cell wall degrading enzyme in the bacteriophage phi29 tail.</title>
        <authorList>
            <person name="Xiang Y."/>
            <person name="Morais M.C."/>
            <person name="Cohen D.N."/>
            <person name="Bowman V.D."/>
            <person name="Anderson D.L."/>
            <person name="Rossmann M.G."/>
        </authorList>
    </citation>
    <scope>X-RAY CRYSTALLOGRAPHY (1.37 ANGSTROMS) OF 1-334 IN COMPLEXES WITH ZINC AND N-ACETYLGLUCOSAMINE OLIGOMER</scope>
    <scope>FUNCTION</scope>
    <scope>SUBCELLULAR LOCATION</scope>
</reference>